<keyword id="KW-0479">Metal-binding</keyword>
<keyword id="KW-0539">Nucleus</keyword>
<keyword id="KW-1185">Reference proteome</keyword>
<keyword id="KW-0687">Ribonucleoprotein</keyword>
<keyword id="KW-0694">RNA-binding</keyword>
<keyword id="KW-0862">Zinc</keyword>
<keyword id="KW-0863">Zinc-finger</keyword>
<feature type="chain" id="PRO_0000414268" description="U1 small nuclear ribonucleoprotein C">
    <location>
        <begin position="1"/>
        <end position="141"/>
    </location>
</feature>
<feature type="zinc finger region" description="Matrin-type" evidence="1">
    <location>
        <begin position="4"/>
        <end position="36"/>
    </location>
</feature>
<feature type="region of interest" description="Disordered" evidence="2">
    <location>
        <begin position="69"/>
        <end position="141"/>
    </location>
</feature>
<feature type="compositionally biased region" description="Pro residues" evidence="2">
    <location>
        <begin position="83"/>
        <end position="97"/>
    </location>
</feature>
<feature type="compositionally biased region" description="Low complexity" evidence="2">
    <location>
        <begin position="100"/>
        <end position="110"/>
    </location>
</feature>
<feature type="compositionally biased region" description="Low complexity" evidence="2">
    <location>
        <begin position="124"/>
        <end position="141"/>
    </location>
</feature>
<dbReference type="EMBL" id="ADBJ01000010">
    <property type="protein sequence ID" value="EFA83815.1"/>
    <property type="molecule type" value="Genomic_DNA"/>
</dbReference>
<dbReference type="RefSeq" id="XP_020435932.1">
    <property type="nucleotide sequence ID" value="XM_020573860.1"/>
</dbReference>
<dbReference type="SMR" id="D3B3B7"/>
<dbReference type="STRING" id="670386.D3B3B7"/>
<dbReference type="GeneID" id="31358406"/>
<dbReference type="InParanoid" id="D3B3B7"/>
<dbReference type="OMA" id="MMPTGPR"/>
<dbReference type="Proteomes" id="UP000001396">
    <property type="component" value="Unassembled WGS sequence"/>
</dbReference>
<dbReference type="GO" id="GO:0000243">
    <property type="term" value="C:commitment complex"/>
    <property type="evidence" value="ECO:0007669"/>
    <property type="project" value="UniProtKB-UniRule"/>
</dbReference>
<dbReference type="GO" id="GO:0005685">
    <property type="term" value="C:U1 snRNP"/>
    <property type="evidence" value="ECO:0000250"/>
    <property type="project" value="UniProtKB"/>
</dbReference>
<dbReference type="GO" id="GO:0071004">
    <property type="term" value="C:U2-type prespliceosome"/>
    <property type="evidence" value="ECO:0007669"/>
    <property type="project" value="UniProtKB-UniRule"/>
</dbReference>
<dbReference type="GO" id="GO:0003729">
    <property type="term" value="F:mRNA binding"/>
    <property type="evidence" value="ECO:0007669"/>
    <property type="project" value="UniProtKB-UniRule"/>
</dbReference>
<dbReference type="GO" id="GO:0030627">
    <property type="term" value="F:pre-mRNA 5'-splice site binding"/>
    <property type="evidence" value="ECO:0007669"/>
    <property type="project" value="InterPro"/>
</dbReference>
<dbReference type="GO" id="GO:0030619">
    <property type="term" value="F:U1 snRNA binding"/>
    <property type="evidence" value="ECO:0007669"/>
    <property type="project" value="UniProtKB-UniRule"/>
</dbReference>
<dbReference type="GO" id="GO:0008270">
    <property type="term" value="F:zinc ion binding"/>
    <property type="evidence" value="ECO:0007669"/>
    <property type="project" value="UniProtKB-UniRule"/>
</dbReference>
<dbReference type="GO" id="GO:0000395">
    <property type="term" value="P:mRNA 5'-splice site recognition"/>
    <property type="evidence" value="ECO:0007669"/>
    <property type="project" value="UniProtKB-UniRule"/>
</dbReference>
<dbReference type="GO" id="GO:0000387">
    <property type="term" value="P:spliceosomal snRNP assembly"/>
    <property type="evidence" value="ECO:0007669"/>
    <property type="project" value="UniProtKB-UniRule"/>
</dbReference>
<dbReference type="FunFam" id="3.30.160.60:FF:000890">
    <property type="entry name" value="U1 small nuclear ribonucleoprotein C"/>
    <property type="match status" value="1"/>
</dbReference>
<dbReference type="Gene3D" id="3.30.160.60">
    <property type="entry name" value="Classic Zinc Finger"/>
    <property type="match status" value="1"/>
</dbReference>
<dbReference type="HAMAP" id="MF_03153">
    <property type="entry name" value="U1_C"/>
    <property type="match status" value="1"/>
</dbReference>
<dbReference type="InterPro" id="IPR000690">
    <property type="entry name" value="Matrin/U1-C_Znf_C2H2"/>
</dbReference>
<dbReference type="InterPro" id="IPR003604">
    <property type="entry name" value="Matrin/U1-like-C_Znf_C2H2"/>
</dbReference>
<dbReference type="InterPro" id="IPR013085">
    <property type="entry name" value="U1-CZ_Znf_C2H2"/>
</dbReference>
<dbReference type="InterPro" id="IPR017340">
    <property type="entry name" value="U1_snRNP-C"/>
</dbReference>
<dbReference type="InterPro" id="IPR036236">
    <property type="entry name" value="Znf_C2H2_sf"/>
</dbReference>
<dbReference type="PANTHER" id="PTHR31148">
    <property type="entry name" value="U1 SMALL NUCLEAR RIBONUCLEOPROTEIN C"/>
    <property type="match status" value="1"/>
</dbReference>
<dbReference type="PANTHER" id="PTHR31148:SF1">
    <property type="entry name" value="U1 SMALL NUCLEAR RIBONUCLEOPROTEIN C"/>
    <property type="match status" value="1"/>
</dbReference>
<dbReference type="Pfam" id="PF06220">
    <property type="entry name" value="zf-U1"/>
    <property type="match status" value="1"/>
</dbReference>
<dbReference type="PIRSF" id="PIRSF037969">
    <property type="entry name" value="U1_snRNP-C"/>
    <property type="match status" value="1"/>
</dbReference>
<dbReference type="SMART" id="SM00451">
    <property type="entry name" value="ZnF_U1"/>
    <property type="match status" value="1"/>
</dbReference>
<dbReference type="SUPFAM" id="SSF57667">
    <property type="entry name" value="beta-beta-alpha zinc fingers"/>
    <property type="match status" value="1"/>
</dbReference>
<dbReference type="PROSITE" id="PS50171">
    <property type="entry name" value="ZF_MATRIN"/>
    <property type="match status" value="1"/>
</dbReference>
<gene>
    <name evidence="1" type="primary">snrpC</name>
    <name type="ORF">PPL_02883</name>
</gene>
<comment type="function">
    <text evidence="1">Component of the spliceosomal U1 snRNP, which is essential for recognition of the pre-mRNA 5' splice-site and the subsequent assembly of the spliceosome. SNRPC/U1-C is directly involved in initial 5' splice-site recognition for both constitutive and regulated alternative splicing. The interaction with the 5' splice-site seems to precede base-pairing between the pre-mRNA and the U1 snRNA. Stimulates commitment or early (E) complex formation by stabilizing the base pairing of the 5' end of the U1 snRNA and the 5' splice-site region.</text>
</comment>
<comment type="subunit">
    <text evidence="1">Component of the U1 snRNP. The U1 snRNP is composed of the U1 snRNA and the 7 core Sm proteins SNRPB, SNRPD1, SNRPD2, SNRPD3, SNRPE, SNRPF and SNRPG that assemble in a heptameric protein ring on the Sm site of the small nuclear RNA to form the core snRNP, and at least 3 U1 snRNP-specific proteins SNRNP70/U1-70K, SNRPA/U1-A and SNRPC/U1-C. SNRPC/U1-C interacts with U1 snRNA and the 5' splice-site region of the pre-mRNA.</text>
</comment>
<comment type="subcellular location">
    <subcellularLocation>
        <location evidence="1">Nucleus</location>
    </subcellularLocation>
</comment>
<comment type="similarity">
    <text evidence="1">Belongs to the U1 small nuclear ribonucleoprotein C family.</text>
</comment>
<evidence type="ECO:0000255" key="1">
    <source>
        <dbReference type="HAMAP-Rule" id="MF_03153"/>
    </source>
</evidence>
<evidence type="ECO:0000256" key="2">
    <source>
        <dbReference type="SAM" id="MobiDB-lite"/>
    </source>
</evidence>
<reference key="1">
    <citation type="journal article" date="2011" name="Genome Res.">
        <title>Phylogeny-wide analysis of social amoeba genomes highlights ancient origins for complex intercellular communication.</title>
        <authorList>
            <person name="Heidel A.J."/>
            <person name="Lawal H.M."/>
            <person name="Felder M."/>
            <person name="Schilde C."/>
            <person name="Helps N.R."/>
            <person name="Tunggal B."/>
            <person name="Rivero F."/>
            <person name="John U."/>
            <person name="Schleicher M."/>
            <person name="Eichinger L."/>
            <person name="Platzer M."/>
            <person name="Noegel A.A."/>
            <person name="Schaap P."/>
            <person name="Gloeckner G."/>
        </authorList>
    </citation>
    <scope>NUCLEOTIDE SEQUENCE [LARGE SCALE GENOMIC DNA]</scope>
    <source>
        <strain>ATCC 26659 / Pp 5 / PN500</strain>
    </source>
</reference>
<organism>
    <name type="scientific">Heterostelium pallidum (strain ATCC 26659 / Pp 5 / PN500)</name>
    <name type="common">Cellular slime mold</name>
    <name type="synonym">Polysphondylium pallidum</name>
    <dbReference type="NCBI Taxonomy" id="670386"/>
    <lineage>
        <taxon>Eukaryota</taxon>
        <taxon>Amoebozoa</taxon>
        <taxon>Evosea</taxon>
        <taxon>Eumycetozoa</taxon>
        <taxon>Dictyostelia</taxon>
        <taxon>Acytosteliales</taxon>
        <taxon>Acytosteliaceae</taxon>
        <taxon>Heterostelium</taxon>
    </lineage>
</organism>
<sequence length="141" mass="16030">MPKYYCEYCDKYLTHDSPSVRKSHTIGKVHQQAVTLYYKQFEAEWFKSQMQQKGGQVPMMPPFGMQPGLLPPNMVPGQFNIPMMPPGQFPFPPPPGQPMGGMPPHQQQPMSFNPHHPYPPPHLQQSAQQFNSNSPPSNNDQ</sequence>
<proteinExistence type="inferred from homology"/>
<accession>D3B3B7</accession>
<name>RU1C_HETP5</name>
<protein>
    <recommendedName>
        <fullName evidence="1">U1 small nuclear ribonucleoprotein C</fullName>
        <shortName evidence="1">U1 snRNP C</shortName>
        <shortName evidence="1">U1-C</shortName>
        <shortName evidence="1">U1C</shortName>
    </recommendedName>
</protein>